<name>PROA_BARHE</name>
<dbReference type="EC" id="1.2.1.41" evidence="1"/>
<dbReference type="EMBL" id="BX897699">
    <property type="protein sequence ID" value="CAF26970.1"/>
    <property type="molecule type" value="Genomic_DNA"/>
</dbReference>
<dbReference type="SMR" id="Q6G4Z0"/>
<dbReference type="PaxDb" id="283166-BH01580"/>
<dbReference type="EnsemblBacteria" id="CAF26970">
    <property type="protein sequence ID" value="CAF26970"/>
    <property type="gene ID" value="BH01580"/>
</dbReference>
<dbReference type="KEGG" id="bhe:BH01580"/>
<dbReference type="eggNOG" id="COG0014">
    <property type="taxonomic scope" value="Bacteria"/>
</dbReference>
<dbReference type="UniPathway" id="UPA00098">
    <property type="reaction ID" value="UER00360"/>
</dbReference>
<dbReference type="Proteomes" id="UP000000421">
    <property type="component" value="Chromosome"/>
</dbReference>
<dbReference type="GO" id="GO:0005737">
    <property type="term" value="C:cytoplasm"/>
    <property type="evidence" value="ECO:0007669"/>
    <property type="project" value="UniProtKB-SubCell"/>
</dbReference>
<dbReference type="GO" id="GO:0004350">
    <property type="term" value="F:glutamate-5-semialdehyde dehydrogenase activity"/>
    <property type="evidence" value="ECO:0007669"/>
    <property type="project" value="UniProtKB-UniRule"/>
</dbReference>
<dbReference type="GO" id="GO:0050661">
    <property type="term" value="F:NADP binding"/>
    <property type="evidence" value="ECO:0007669"/>
    <property type="project" value="InterPro"/>
</dbReference>
<dbReference type="GO" id="GO:0055129">
    <property type="term" value="P:L-proline biosynthetic process"/>
    <property type="evidence" value="ECO:0007669"/>
    <property type="project" value="UniProtKB-UniRule"/>
</dbReference>
<dbReference type="CDD" id="cd07079">
    <property type="entry name" value="ALDH_F18-19_ProA-GPR"/>
    <property type="match status" value="1"/>
</dbReference>
<dbReference type="Gene3D" id="3.40.605.10">
    <property type="entry name" value="Aldehyde Dehydrogenase, Chain A, domain 1"/>
    <property type="match status" value="1"/>
</dbReference>
<dbReference type="Gene3D" id="3.40.309.10">
    <property type="entry name" value="Aldehyde Dehydrogenase, Chain A, domain 2"/>
    <property type="match status" value="1"/>
</dbReference>
<dbReference type="HAMAP" id="MF_00412">
    <property type="entry name" value="ProA"/>
    <property type="match status" value="1"/>
</dbReference>
<dbReference type="InterPro" id="IPR016161">
    <property type="entry name" value="Ald_DH/histidinol_DH"/>
</dbReference>
<dbReference type="InterPro" id="IPR016163">
    <property type="entry name" value="Ald_DH_C"/>
</dbReference>
<dbReference type="InterPro" id="IPR016162">
    <property type="entry name" value="Ald_DH_N"/>
</dbReference>
<dbReference type="InterPro" id="IPR015590">
    <property type="entry name" value="Aldehyde_DH_dom"/>
</dbReference>
<dbReference type="InterPro" id="IPR020593">
    <property type="entry name" value="G-glutamylP_reductase_CS"/>
</dbReference>
<dbReference type="InterPro" id="IPR012134">
    <property type="entry name" value="Glu-5-SA_DH"/>
</dbReference>
<dbReference type="InterPro" id="IPR000965">
    <property type="entry name" value="GPR_dom"/>
</dbReference>
<dbReference type="NCBIfam" id="NF001221">
    <property type="entry name" value="PRK00197.1"/>
    <property type="match status" value="1"/>
</dbReference>
<dbReference type="NCBIfam" id="TIGR00407">
    <property type="entry name" value="proA"/>
    <property type="match status" value="1"/>
</dbReference>
<dbReference type="PANTHER" id="PTHR11063:SF8">
    <property type="entry name" value="DELTA-1-PYRROLINE-5-CARBOXYLATE SYNTHASE"/>
    <property type="match status" value="1"/>
</dbReference>
<dbReference type="PANTHER" id="PTHR11063">
    <property type="entry name" value="GLUTAMATE SEMIALDEHYDE DEHYDROGENASE"/>
    <property type="match status" value="1"/>
</dbReference>
<dbReference type="Pfam" id="PF00171">
    <property type="entry name" value="Aldedh"/>
    <property type="match status" value="1"/>
</dbReference>
<dbReference type="PIRSF" id="PIRSF000151">
    <property type="entry name" value="GPR"/>
    <property type="match status" value="1"/>
</dbReference>
<dbReference type="SUPFAM" id="SSF53720">
    <property type="entry name" value="ALDH-like"/>
    <property type="match status" value="1"/>
</dbReference>
<dbReference type="PROSITE" id="PS01223">
    <property type="entry name" value="PROA"/>
    <property type="match status" value="1"/>
</dbReference>
<sequence>MKDMGRKARRAATVLAVMSSEQKNKALEMIALSLEAHSDEILRANHQDLLNATQNNLTVAMVDRLKLNEVRLCTIIDSVRQVACLPDPVGQVMDEWTRPNGLHISRVRTPLGVIGIIYESRPNVTIDASTLCLKAGNAAILRGGSDSFHSAHALHCALVKGLKKAGFPKDAIQMVATKDRGAVGEMLKGLDGAIDVIVPRGGKNLVARIQVDARVPIFAHLEGLCHIYIDQSADLDMARNIVLNAKLRRTGICSAVETVLIDRQALEKFLPILTALQKKGCEIRATEDIVFLMPDAKLAFEEDWSHEYLDAIVSVKTVESVEGAIAHIKRYSSGHTESIIAEDMEIVEKFFNHLDSAILLHNASTQFADGGEFGFGAEIGIATGKMHARGPIGVEQLTSFQYHIKGNGQVRP</sequence>
<reference key="1">
    <citation type="journal article" date="2004" name="Proc. Natl. Acad. Sci. U.S.A.">
        <title>The louse-borne human pathogen Bartonella quintana is a genomic derivative of the zoonotic agent Bartonella henselae.</title>
        <authorList>
            <person name="Alsmark U.C.M."/>
            <person name="Frank A.C."/>
            <person name="Karlberg E.O."/>
            <person name="Legault B.-A."/>
            <person name="Ardell D.H."/>
            <person name="Canbaeck B."/>
            <person name="Eriksson A.-S."/>
            <person name="Naeslund A.K."/>
            <person name="Handley S.A."/>
            <person name="Huvet M."/>
            <person name="La Scola B."/>
            <person name="Holmberg M."/>
            <person name="Andersson S.G.E."/>
        </authorList>
    </citation>
    <scope>NUCLEOTIDE SEQUENCE [LARGE SCALE GENOMIC DNA]</scope>
    <source>
        <strain>ATCC 49882 / DSM 28221 / CCUG 30454 / Houston 1</strain>
    </source>
</reference>
<organism>
    <name type="scientific">Bartonella henselae (strain ATCC 49882 / DSM 28221 / CCUG 30454 / Houston 1)</name>
    <name type="common">Rochalimaea henselae</name>
    <dbReference type="NCBI Taxonomy" id="283166"/>
    <lineage>
        <taxon>Bacteria</taxon>
        <taxon>Pseudomonadati</taxon>
        <taxon>Pseudomonadota</taxon>
        <taxon>Alphaproteobacteria</taxon>
        <taxon>Hyphomicrobiales</taxon>
        <taxon>Bartonellaceae</taxon>
        <taxon>Bartonella</taxon>
    </lineage>
</organism>
<comment type="function">
    <text evidence="1">Catalyzes the NADPH-dependent reduction of L-glutamate 5-phosphate into L-glutamate 5-semialdehyde and phosphate. The product spontaneously undergoes cyclization to form 1-pyrroline-5-carboxylate.</text>
</comment>
<comment type="catalytic activity">
    <reaction evidence="1">
        <text>L-glutamate 5-semialdehyde + phosphate + NADP(+) = L-glutamyl 5-phosphate + NADPH + H(+)</text>
        <dbReference type="Rhea" id="RHEA:19541"/>
        <dbReference type="ChEBI" id="CHEBI:15378"/>
        <dbReference type="ChEBI" id="CHEBI:43474"/>
        <dbReference type="ChEBI" id="CHEBI:57783"/>
        <dbReference type="ChEBI" id="CHEBI:58066"/>
        <dbReference type="ChEBI" id="CHEBI:58274"/>
        <dbReference type="ChEBI" id="CHEBI:58349"/>
        <dbReference type="EC" id="1.2.1.41"/>
    </reaction>
</comment>
<comment type="pathway">
    <text evidence="1">Amino-acid biosynthesis; L-proline biosynthesis; L-glutamate 5-semialdehyde from L-glutamate: step 2/2.</text>
</comment>
<comment type="subcellular location">
    <subcellularLocation>
        <location evidence="1">Cytoplasm</location>
    </subcellularLocation>
</comment>
<comment type="similarity">
    <text evidence="1">Belongs to the gamma-glutamyl phosphate reductase family.</text>
</comment>
<keyword id="KW-0028">Amino-acid biosynthesis</keyword>
<keyword id="KW-0963">Cytoplasm</keyword>
<keyword id="KW-0521">NADP</keyword>
<keyword id="KW-0560">Oxidoreductase</keyword>
<keyword id="KW-0641">Proline biosynthesis</keyword>
<proteinExistence type="inferred from homology"/>
<protein>
    <recommendedName>
        <fullName evidence="1">Gamma-glutamyl phosphate reductase</fullName>
        <shortName evidence="1">GPR</shortName>
        <ecNumber evidence="1">1.2.1.41</ecNumber>
    </recommendedName>
    <alternativeName>
        <fullName evidence="1">Glutamate-5-semialdehyde dehydrogenase</fullName>
    </alternativeName>
    <alternativeName>
        <fullName evidence="1">Glutamyl-gamma-semialdehyde dehydrogenase</fullName>
        <shortName evidence="1">GSA dehydrogenase</shortName>
    </alternativeName>
</protein>
<evidence type="ECO:0000255" key="1">
    <source>
        <dbReference type="HAMAP-Rule" id="MF_00412"/>
    </source>
</evidence>
<feature type="chain" id="PRO_0000189698" description="Gamma-glutamyl phosphate reductase">
    <location>
        <begin position="1"/>
        <end position="412"/>
    </location>
</feature>
<accession>Q6G4Z0</accession>
<gene>
    <name evidence="1" type="primary">proA</name>
    <name type="ordered locus">BH01580</name>
</gene>